<sequence length="575" mass="60329">MLGVLVLGALALAGLGFPAPAEPQPGGSQCVEHDCFALYPGPATFLNASQICDGLRGHLMTVRSSVAADVISLLLNGDGGVGRRRLWIGLQLPPGCGDPKRLGPLRGFQWVTGDNNTSYSRWARLDLNGAPLCGPLCVAVSAAEATVPSEPIWEEQQCEVKADGFLCEFHFPATCRPLAVEPGAAAAAVSITYGTPFAARGADFQALPVGSSAAVAPLGLQLMCTAPPGAVQGHWAREAPGAWDCSVENGGCEHACNAIPGAPRCQCPAGAALQADGRSCTASATQSCNDLCEHFCVPNPDQPGSYSCMCETGYRLAADQHRCEDVDDCILEPSPCPQRCVNTQGGFECHCYPNYDLVDGECVEPVDPCFRANCEYQCQPLNQTSYLCVCAEGFAPIPHEPHRCQMFCNQTACPADCDPNTQASCECPEGYILDDGFICTDIDECENGGFCSGVCHNLPGTFECICGPDSALARHIGTDCDSGKVDGGDSGSGEPPPSPTPGSTLTPPAVGLVHSGLLIGISIASLCLVVALLALLCHLRKKQGAARAKMEYKCAAPSKEVVLQHVRTERTPQRL</sequence>
<dbReference type="EMBL" id="X05495">
    <property type="protein sequence ID" value="CAA29045.1"/>
    <property type="molecule type" value="mRNA"/>
</dbReference>
<dbReference type="EMBL" id="M16552">
    <property type="protein sequence ID" value="AAB59508.1"/>
    <property type="molecule type" value="mRNA"/>
</dbReference>
<dbReference type="EMBL" id="J02973">
    <property type="protein sequence ID" value="AAA61175.1"/>
    <property type="molecule type" value="Genomic_DNA"/>
</dbReference>
<dbReference type="EMBL" id="D00210">
    <property type="protein sequence ID" value="BAA00149.1"/>
    <property type="molecule type" value="Genomic_DNA"/>
</dbReference>
<dbReference type="EMBL" id="AF495471">
    <property type="protein sequence ID" value="AAM03232.1"/>
    <property type="molecule type" value="Genomic_DNA"/>
</dbReference>
<dbReference type="EMBL" id="AL049651">
    <property type="status" value="NOT_ANNOTATED_CDS"/>
    <property type="molecule type" value="Genomic_DNA"/>
</dbReference>
<dbReference type="EMBL" id="BC035602">
    <property type="protein sequence ID" value="AAH35602.2"/>
    <property type="molecule type" value="mRNA"/>
</dbReference>
<dbReference type="EMBL" id="BC053357">
    <property type="protein sequence ID" value="AAH53357.1"/>
    <property type="molecule type" value="mRNA"/>
</dbReference>
<dbReference type="CCDS" id="CCDS13148.1"/>
<dbReference type="PIR" id="A41442">
    <property type="entry name" value="THHUB"/>
</dbReference>
<dbReference type="RefSeq" id="NP_000352.1">
    <property type="nucleotide sequence ID" value="NM_000361.3"/>
</dbReference>
<dbReference type="PDB" id="1ADX">
    <property type="method" value="NMR"/>
    <property type="chains" value="A=405-444"/>
</dbReference>
<dbReference type="PDB" id="1DQB">
    <property type="method" value="NMR"/>
    <property type="chains" value="A=364-444"/>
</dbReference>
<dbReference type="PDB" id="1DX5">
    <property type="method" value="X-ray"/>
    <property type="resolution" value="2.30 A"/>
    <property type="chains" value="I/J/K/L=363-480"/>
</dbReference>
<dbReference type="PDB" id="1EGT">
    <property type="method" value="NMR"/>
    <property type="chains" value="A=427-444"/>
</dbReference>
<dbReference type="PDB" id="1FGD">
    <property type="method" value="NMR"/>
    <property type="chains" value="A=427-444"/>
</dbReference>
<dbReference type="PDB" id="1FGE">
    <property type="method" value="NMR"/>
    <property type="chains" value="A=425-444"/>
</dbReference>
<dbReference type="PDB" id="1HLT">
    <property type="method" value="X-ray"/>
    <property type="resolution" value="3.00 A"/>
    <property type="chains" value="R=426-444"/>
</dbReference>
<dbReference type="PDB" id="1TMR">
    <property type="method" value="NMR"/>
    <property type="chains" value="A=389-405"/>
</dbReference>
<dbReference type="PDB" id="1ZAQ">
    <property type="method" value="NMR"/>
    <property type="chains" value="A=364-407"/>
</dbReference>
<dbReference type="PDB" id="2ADX">
    <property type="method" value="NMR"/>
    <property type="chains" value="A=405-444"/>
</dbReference>
<dbReference type="PDB" id="3GIS">
    <property type="method" value="X-ray"/>
    <property type="resolution" value="2.40 A"/>
    <property type="chains" value="X/Y/Z=363-483"/>
</dbReference>
<dbReference type="PDB" id="5TO3">
    <property type="method" value="X-ray"/>
    <property type="resolution" value="2.34 A"/>
    <property type="chains" value="B=363-483"/>
</dbReference>
<dbReference type="PDB" id="7T4R">
    <property type="method" value="EM"/>
    <property type="resolution" value="3.30 A"/>
    <property type="chains" value="A=1-516"/>
</dbReference>
<dbReference type="PDBsum" id="1ADX"/>
<dbReference type="PDBsum" id="1DQB"/>
<dbReference type="PDBsum" id="1DX5"/>
<dbReference type="PDBsum" id="1EGT"/>
<dbReference type="PDBsum" id="1FGD"/>
<dbReference type="PDBsum" id="1FGE"/>
<dbReference type="PDBsum" id="1HLT"/>
<dbReference type="PDBsum" id="1TMR"/>
<dbReference type="PDBsum" id="1ZAQ"/>
<dbReference type="PDBsum" id="2ADX"/>
<dbReference type="PDBsum" id="3GIS"/>
<dbReference type="PDBsum" id="5TO3"/>
<dbReference type="PDBsum" id="7T4R"/>
<dbReference type="BMRB" id="P07204"/>
<dbReference type="EMDB" id="EMD-25686"/>
<dbReference type="SMR" id="P07204"/>
<dbReference type="BioGRID" id="112914">
    <property type="interactions" value="37"/>
</dbReference>
<dbReference type="ComplexPortal" id="CPX-6223">
    <property type="entry name" value="Thrombin-Thrombomodulin complex"/>
</dbReference>
<dbReference type="FunCoup" id="P07204">
    <property type="interactions" value="131"/>
</dbReference>
<dbReference type="IntAct" id="P07204">
    <property type="interactions" value="27"/>
</dbReference>
<dbReference type="STRING" id="9606.ENSP00000366307"/>
<dbReference type="DrugBank" id="DB09213">
    <property type="generic name" value="Dexibuprofen"/>
</dbReference>
<dbReference type="DrugBank" id="DB00055">
    <property type="generic name" value="Drotrecogin alfa"/>
</dbReference>
<dbReference type="DrugBank" id="DB01050">
    <property type="generic name" value="Ibuprofen"/>
</dbReference>
<dbReference type="UniLectin" id="P07204"/>
<dbReference type="GlyConnect" id="591">
    <property type="glycosylation" value="2 O-Linked glycans"/>
</dbReference>
<dbReference type="GlyCosmos" id="P07204">
    <property type="glycosylation" value="7 sites, 2 glycans"/>
</dbReference>
<dbReference type="GlyGen" id="P07204">
    <property type="glycosylation" value="13 sites, 2 N-linked glycans (1 site)"/>
</dbReference>
<dbReference type="iPTMnet" id="P07204"/>
<dbReference type="MetOSite" id="P07204"/>
<dbReference type="PhosphoSitePlus" id="P07204"/>
<dbReference type="SwissPalm" id="P07204"/>
<dbReference type="BioMuta" id="THBD"/>
<dbReference type="DMDM" id="136170"/>
<dbReference type="jPOST" id="P07204"/>
<dbReference type="MassIVE" id="P07204"/>
<dbReference type="PaxDb" id="9606-ENSP00000366307"/>
<dbReference type="PeptideAtlas" id="P07204"/>
<dbReference type="ProteomicsDB" id="51973"/>
<dbReference type="Pumba" id="P07204"/>
<dbReference type="Antibodypedia" id="792">
    <property type="antibodies" value="1029 antibodies from 44 providers"/>
</dbReference>
<dbReference type="DNASU" id="7056"/>
<dbReference type="Ensembl" id="ENST00000377103.3">
    <property type="protein sequence ID" value="ENSP00000366307.2"/>
    <property type="gene ID" value="ENSG00000178726.7"/>
</dbReference>
<dbReference type="GeneID" id="7056"/>
<dbReference type="KEGG" id="hsa:7056"/>
<dbReference type="MANE-Select" id="ENST00000377103.3">
    <property type="protein sequence ID" value="ENSP00000366307.2"/>
    <property type="RefSeq nucleotide sequence ID" value="NM_000361.3"/>
    <property type="RefSeq protein sequence ID" value="NP_000352.1"/>
</dbReference>
<dbReference type="UCSC" id="uc002wss.4">
    <property type="organism name" value="human"/>
</dbReference>
<dbReference type="AGR" id="HGNC:11784"/>
<dbReference type="CTD" id="7056"/>
<dbReference type="DisGeNET" id="7056"/>
<dbReference type="GeneCards" id="THBD"/>
<dbReference type="GeneReviews" id="THBD"/>
<dbReference type="HGNC" id="HGNC:11784">
    <property type="gene designation" value="THBD"/>
</dbReference>
<dbReference type="HPA" id="ENSG00000178726">
    <property type="expression patterns" value="Low tissue specificity"/>
</dbReference>
<dbReference type="MalaCards" id="THBD"/>
<dbReference type="MIM" id="188040">
    <property type="type" value="gene"/>
</dbReference>
<dbReference type="MIM" id="612926">
    <property type="type" value="phenotype"/>
</dbReference>
<dbReference type="MIM" id="614486">
    <property type="type" value="phenotype"/>
</dbReference>
<dbReference type="neXtProt" id="NX_P07204"/>
<dbReference type="OpenTargets" id="ENSG00000178726"/>
<dbReference type="Orphanet" id="544472">
    <property type="disease" value="Atypical hemolytic uremic syndrome with complement gene abnormality"/>
</dbReference>
<dbReference type="Orphanet" id="436169">
    <property type="disease" value="Thrombomodulin-related bleeding disorder"/>
</dbReference>
<dbReference type="PharmGKB" id="PA36496"/>
<dbReference type="VEuPathDB" id="HostDB:ENSG00000178726"/>
<dbReference type="eggNOG" id="ENOG502R1T7">
    <property type="taxonomic scope" value="Eukaryota"/>
</dbReference>
<dbReference type="GeneTree" id="ENSGT00940000163276"/>
<dbReference type="HOGENOM" id="CLU_027075_2_1_1"/>
<dbReference type="InParanoid" id="P07204"/>
<dbReference type="OMA" id="CMCETGY"/>
<dbReference type="OrthoDB" id="4062651at2759"/>
<dbReference type="PAN-GO" id="P07204">
    <property type="GO annotations" value="0 GO annotations based on evolutionary models"/>
</dbReference>
<dbReference type="PhylomeDB" id="P07204"/>
<dbReference type="TreeFam" id="TF330714"/>
<dbReference type="BioCyc" id="MetaCyc:ENSG00000178726-MONOMER"/>
<dbReference type="PathwayCommons" id="P07204"/>
<dbReference type="Reactome" id="R-HSA-140875">
    <property type="pathway name" value="Common Pathway of Fibrin Clot Formation"/>
</dbReference>
<dbReference type="Reactome" id="R-HSA-202733">
    <property type="pathway name" value="Cell surface interactions at the vascular wall"/>
</dbReference>
<dbReference type="SignaLink" id="P07204"/>
<dbReference type="SIGNOR" id="P07204"/>
<dbReference type="BioGRID-ORCS" id="7056">
    <property type="hits" value="11 hits in 1160 CRISPR screens"/>
</dbReference>
<dbReference type="ChiTaRS" id="THBD">
    <property type="organism name" value="human"/>
</dbReference>
<dbReference type="EvolutionaryTrace" id="P07204"/>
<dbReference type="GeneWiki" id="Thrombomodulin"/>
<dbReference type="GenomeRNAi" id="7056"/>
<dbReference type="Pharos" id="P07204">
    <property type="development level" value="Tbio"/>
</dbReference>
<dbReference type="PRO" id="PR:P07204"/>
<dbReference type="Proteomes" id="UP000005640">
    <property type="component" value="Chromosome 20"/>
</dbReference>
<dbReference type="RNAct" id="P07204">
    <property type="molecule type" value="protein"/>
</dbReference>
<dbReference type="Bgee" id="ENSG00000178726">
    <property type="expression patterns" value="Expressed in gingival epithelium and 185 other cell types or tissues"/>
</dbReference>
<dbReference type="GO" id="GO:0016327">
    <property type="term" value="C:apicolateral plasma membrane"/>
    <property type="evidence" value="ECO:0007669"/>
    <property type="project" value="Ensembl"/>
</dbReference>
<dbReference type="GO" id="GO:0009986">
    <property type="term" value="C:cell surface"/>
    <property type="evidence" value="ECO:0000314"/>
    <property type="project" value="BHF-UCL"/>
</dbReference>
<dbReference type="GO" id="GO:0009897">
    <property type="term" value="C:external side of plasma membrane"/>
    <property type="evidence" value="ECO:0007669"/>
    <property type="project" value="Ensembl"/>
</dbReference>
<dbReference type="GO" id="GO:0005615">
    <property type="term" value="C:extracellular space"/>
    <property type="evidence" value="ECO:0007669"/>
    <property type="project" value="Ensembl"/>
</dbReference>
<dbReference type="GO" id="GO:0005886">
    <property type="term" value="C:plasma membrane"/>
    <property type="evidence" value="ECO:0000314"/>
    <property type="project" value="UniProt"/>
</dbReference>
<dbReference type="GO" id="GO:1905370">
    <property type="term" value="C:serine-type endopeptidase complex"/>
    <property type="evidence" value="ECO:0000353"/>
    <property type="project" value="ComplexPortal"/>
</dbReference>
<dbReference type="GO" id="GO:0005774">
    <property type="term" value="C:vacuolar membrane"/>
    <property type="evidence" value="ECO:0007669"/>
    <property type="project" value="Ensembl"/>
</dbReference>
<dbReference type="GO" id="GO:0005509">
    <property type="term" value="F:calcium ion binding"/>
    <property type="evidence" value="ECO:0000304"/>
    <property type="project" value="ProtInc"/>
</dbReference>
<dbReference type="GO" id="GO:0038023">
    <property type="term" value="F:signaling receptor activity"/>
    <property type="evidence" value="ECO:0000314"/>
    <property type="project" value="UniProt"/>
</dbReference>
<dbReference type="GO" id="GO:0004888">
    <property type="term" value="F:transmembrane signaling receptor activity"/>
    <property type="evidence" value="ECO:0007669"/>
    <property type="project" value="InterPro"/>
</dbReference>
<dbReference type="GO" id="GO:0007596">
    <property type="term" value="P:blood coagulation"/>
    <property type="evidence" value="ECO:0000304"/>
    <property type="project" value="ProtInc"/>
</dbReference>
<dbReference type="GO" id="GO:0072377">
    <property type="term" value="P:blood coagulation, common pathway"/>
    <property type="evidence" value="ECO:0000303"/>
    <property type="project" value="ComplexPortal"/>
</dbReference>
<dbReference type="GO" id="GO:0007565">
    <property type="term" value="P:female pregnancy"/>
    <property type="evidence" value="ECO:0007669"/>
    <property type="project" value="Ensembl"/>
</dbReference>
<dbReference type="GO" id="GO:0030195">
    <property type="term" value="P:negative regulation of blood coagulation"/>
    <property type="evidence" value="ECO:0000314"/>
    <property type="project" value="UniProt"/>
</dbReference>
<dbReference type="GO" id="GO:0051918">
    <property type="term" value="P:negative regulation of fibrinolysis"/>
    <property type="evidence" value="ECO:0000304"/>
    <property type="project" value="BHF-UCL"/>
</dbReference>
<dbReference type="GO" id="GO:0010544">
    <property type="term" value="P:negative regulation of platelet activation"/>
    <property type="evidence" value="ECO:0000304"/>
    <property type="project" value="BHF-UCL"/>
</dbReference>
<dbReference type="GO" id="GO:0006508">
    <property type="term" value="P:proteolysis"/>
    <property type="evidence" value="ECO:0000303"/>
    <property type="project" value="ComplexPortal"/>
</dbReference>
<dbReference type="GO" id="GO:0051591">
    <property type="term" value="P:response to cAMP"/>
    <property type="evidence" value="ECO:0007669"/>
    <property type="project" value="Ensembl"/>
</dbReference>
<dbReference type="GO" id="GO:0032496">
    <property type="term" value="P:response to lipopolysaccharide"/>
    <property type="evidence" value="ECO:0007669"/>
    <property type="project" value="Ensembl"/>
</dbReference>
<dbReference type="GO" id="GO:0010165">
    <property type="term" value="P:response to X-ray"/>
    <property type="evidence" value="ECO:0007669"/>
    <property type="project" value="Ensembl"/>
</dbReference>
<dbReference type="GO" id="GO:0031638">
    <property type="term" value="P:zymogen activation"/>
    <property type="evidence" value="ECO:0000303"/>
    <property type="project" value="ComplexPortal"/>
</dbReference>
<dbReference type="CDD" id="cd03600">
    <property type="entry name" value="CLECT_thrombomodulin_like"/>
    <property type="match status" value="1"/>
</dbReference>
<dbReference type="CDD" id="cd00054">
    <property type="entry name" value="EGF_CA"/>
    <property type="match status" value="2"/>
</dbReference>
<dbReference type="CDD" id="cd19941">
    <property type="entry name" value="TIL"/>
    <property type="match status" value="1"/>
</dbReference>
<dbReference type="FunFam" id="2.10.25.10:FF:000406">
    <property type="entry name" value="CD248 molecule"/>
    <property type="match status" value="1"/>
</dbReference>
<dbReference type="FunFam" id="2.10.25.10:FF:000797">
    <property type="entry name" value="Thrombomodulin"/>
    <property type="match status" value="1"/>
</dbReference>
<dbReference type="FunFam" id="2.10.25.10:FF:000816">
    <property type="entry name" value="Thrombomodulin"/>
    <property type="match status" value="1"/>
</dbReference>
<dbReference type="FunFam" id="2.10.25.10:FF:000874">
    <property type="entry name" value="Thrombomodulin"/>
    <property type="match status" value="1"/>
</dbReference>
<dbReference type="FunFam" id="2.10.25.10:FF:000899">
    <property type="entry name" value="Thrombomodulin"/>
    <property type="match status" value="1"/>
</dbReference>
<dbReference type="FunFam" id="2.10.25.10:FF:000927">
    <property type="entry name" value="Thrombomodulin"/>
    <property type="match status" value="1"/>
</dbReference>
<dbReference type="FunFam" id="3.10.100.10:FF:000129">
    <property type="entry name" value="Thrombomodulin"/>
    <property type="match status" value="1"/>
</dbReference>
<dbReference type="Gene3D" id="2.10.25.10">
    <property type="entry name" value="Laminin"/>
    <property type="match status" value="6"/>
</dbReference>
<dbReference type="Gene3D" id="3.10.100.10">
    <property type="entry name" value="Mannose-Binding Protein A, subunit A"/>
    <property type="match status" value="1"/>
</dbReference>
<dbReference type="InterPro" id="IPR001304">
    <property type="entry name" value="C-type_lectin-like"/>
</dbReference>
<dbReference type="InterPro" id="IPR016186">
    <property type="entry name" value="C-type_lectin-like/link_sf"/>
</dbReference>
<dbReference type="InterPro" id="IPR026823">
    <property type="entry name" value="cEGF"/>
</dbReference>
<dbReference type="InterPro" id="IPR016187">
    <property type="entry name" value="CTDL_fold"/>
</dbReference>
<dbReference type="InterPro" id="IPR001881">
    <property type="entry name" value="EGF-like_Ca-bd_dom"/>
</dbReference>
<dbReference type="InterPro" id="IPR000742">
    <property type="entry name" value="EGF-like_dom"/>
</dbReference>
<dbReference type="InterPro" id="IPR000152">
    <property type="entry name" value="EGF-type_Asp/Asn_hydroxyl_site"/>
</dbReference>
<dbReference type="InterPro" id="IPR018097">
    <property type="entry name" value="EGF_Ca-bd_CS"/>
</dbReference>
<dbReference type="InterPro" id="IPR009030">
    <property type="entry name" value="Growth_fac_rcpt_cys_sf"/>
</dbReference>
<dbReference type="InterPro" id="IPR049883">
    <property type="entry name" value="NOTCH1_EGF-like"/>
</dbReference>
<dbReference type="InterPro" id="IPR052126">
    <property type="entry name" value="Spindle_Org/Thrombomodulin"/>
</dbReference>
<dbReference type="InterPro" id="IPR015149">
    <property type="entry name" value="Tme5_EGF-like"/>
</dbReference>
<dbReference type="PANTHER" id="PTHR24036">
    <property type="entry name" value="SKELETOR-RELATED"/>
    <property type="match status" value="1"/>
</dbReference>
<dbReference type="PANTHER" id="PTHR24036:SF5">
    <property type="entry name" value="THROMBOMODULIN"/>
    <property type="match status" value="1"/>
</dbReference>
<dbReference type="Pfam" id="PF12662">
    <property type="entry name" value="cEGF"/>
    <property type="match status" value="1"/>
</dbReference>
<dbReference type="Pfam" id="PF07645">
    <property type="entry name" value="EGF_CA"/>
    <property type="match status" value="1"/>
</dbReference>
<dbReference type="Pfam" id="PF09064">
    <property type="entry name" value="EGF_Tme5"/>
    <property type="match status" value="1"/>
</dbReference>
<dbReference type="Pfam" id="PF14670">
    <property type="entry name" value="FXa_inhibition"/>
    <property type="match status" value="1"/>
</dbReference>
<dbReference type="Pfam" id="PF00059">
    <property type="entry name" value="Lectin_C"/>
    <property type="match status" value="1"/>
</dbReference>
<dbReference type="Pfam" id="PF25444">
    <property type="entry name" value="THBD"/>
    <property type="match status" value="1"/>
</dbReference>
<dbReference type="PIRSF" id="PIRSF001775">
    <property type="entry name" value="CD93/CD141"/>
    <property type="match status" value="1"/>
</dbReference>
<dbReference type="PRINTS" id="PR00907">
    <property type="entry name" value="THRMBOMODULN"/>
</dbReference>
<dbReference type="SMART" id="SM00034">
    <property type="entry name" value="CLECT"/>
    <property type="match status" value="1"/>
</dbReference>
<dbReference type="SMART" id="SM00181">
    <property type="entry name" value="EGF"/>
    <property type="match status" value="6"/>
</dbReference>
<dbReference type="SMART" id="SM00179">
    <property type="entry name" value="EGF_CA"/>
    <property type="match status" value="4"/>
</dbReference>
<dbReference type="SUPFAM" id="SSF56436">
    <property type="entry name" value="C-type lectin-like"/>
    <property type="match status" value="1"/>
</dbReference>
<dbReference type="SUPFAM" id="SSF57196">
    <property type="entry name" value="EGF/Laminin"/>
    <property type="match status" value="3"/>
</dbReference>
<dbReference type="SUPFAM" id="SSF57184">
    <property type="entry name" value="Growth factor receptor domain"/>
    <property type="match status" value="1"/>
</dbReference>
<dbReference type="PROSITE" id="PS00010">
    <property type="entry name" value="ASX_HYDROXYL"/>
    <property type="match status" value="2"/>
</dbReference>
<dbReference type="PROSITE" id="PS50041">
    <property type="entry name" value="C_TYPE_LECTIN_2"/>
    <property type="match status" value="1"/>
</dbReference>
<dbReference type="PROSITE" id="PS01186">
    <property type="entry name" value="EGF_2"/>
    <property type="match status" value="2"/>
</dbReference>
<dbReference type="PROSITE" id="PS50026">
    <property type="entry name" value="EGF_3"/>
    <property type="match status" value="4"/>
</dbReference>
<dbReference type="PROSITE" id="PS01187">
    <property type="entry name" value="EGF_CA"/>
    <property type="match status" value="2"/>
</dbReference>
<feature type="signal peptide" evidence="16">
    <location>
        <begin position="1"/>
        <end position="18"/>
    </location>
</feature>
<feature type="chain" id="PRO_0000007771" description="Thrombomodulin">
    <location>
        <begin position="19"/>
        <end position="575"/>
    </location>
</feature>
<feature type="topological domain" description="Extracellular" evidence="3">
    <location>
        <begin position="19"/>
        <end position="515"/>
    </location>
</feature>
<feature type="transmembrane region" description="Helical" evidence="3">
    <location>
        <begin position="516"/>
        <end position="539"/>
    </location>
</feature>
<feature type="topological domain" description="Cytoplasmic" evidence="3">
    <location>
        <begin position="540"/>
        <end position="575"/>
    </location>
</feature>
<feature type="domain" description="C-type lectin" evidence="4">
    <location>
        <begin position="31"/>
        <end position="169"/>
    </location>
</feature>
<feature type="domain" description="EGF-like 1" evidence="5">
    <location>
        <begin position="241"/>
        <end position="281"/>
    </location>
</feature>
<feature type="domain" description="EGF-like 2" evidence="5">
    <location>
        <begin position="284"/>
        <end position="324"/>
    </location>
</feature>
<feature type="domain" description="EGF-like 3; calcium-binding" evidence="5">
    <location>
        <begin position="325"/>
        <end position="363"/>
    </location>
</feature>
<feature type="domain" description="EGF-like 4" evidence="5">
    <location>
        <begin position="365"/>
        <end position="405"/>
    </location>
</feature>
<feature type="domain" description="EGF-like 5" evidence="5">
    <location>
        <begin position="404"/>
        <end position="440"/>
    </location>
</feature>
<feature type="domain" description="EGF-like 6; calcium-binding" evidence="5">
    <location>
        <begin position="441"/>
        <end position="481"/>
    </location>
</feature>
<feature type="region of interest" description="Involved in alpha-L/beta-2 and alpha-M/beta-2 integrin binding" evidence="15">
    <location>
        <begin position="481"/>
        <end position="515"/>
    </location>
</feature>
<feature type="region of interest" description="Disordered" evidence="6">
    <location>
        <begin position="484"/>
        <end position="506"/>
    </location>
</feature>
<feature type="modified residue" description="(3R)-3-hydroxyasparagine" evidence="21">
    <location>
        <position position="342"/>
    </location>
</feature>
<feature type="glycosylation site" description="N-linked (GlcNAc...) asparagine" evidence="3">
    <location>
        <position position="47"/>
    </location>
</feature>
<feature type="glycosylation site" description="N-linked (GlcNAc...) asparagine" evidence="3">
    <location>
        <position position="115"/>
    </location>
</feature>
<feature type="glycosylation site" description="N-linked (GlcNAc...) asparagine" evidence="3">
    <location>
        <position position="116"/>
    </location>
</feature>
<feature type="glycosylation site" description="N-linked (GlcNAc...) asparagine" evidence="3">
    <location>
        <position position="382"/>
    </location>
</feature>
<feature type="glycosylation site" description="N-linked (GlcNAc...) asparagine" evidence="3">
    <location>
        <position position="409"/>
    </location>
</feature>
<feature type="glycosylation site" description="O-linked (Xyl...) (chondroitin sulfate) serine" evidence="20">
    <location>
        <position position="490"/>
    </location>
</feature>
<feature type="glycosylation site" description="O-linked (Xyl...) (chondroitin sulfate) serine" evidence="20">
    <location>
        <position position="492"/>
    </location>
</feature>
<feature type="disulfide bond" evidence="1">
    <location>
        <begin position="137"/>
        <end position="158"/>
    </location>
</feature>
<feature type="disulfide bond" evidence="1">
    <location>
        <begin position="245"/>
        <end position="256"/>
    </location>
</feature>
<feature type="disulfide bond" evidence="1">
    <location>
        <begin position="252"/>
        <end position="265"/>
    </location>
</feature>
<feature type="disulfide bond" evidence="1">
    <location>
        <begin position="267"/>
        <end position="280"/>
    </location>
</feature>
<feature type="disulfide bond" evidence="1">
    <location>
        <begin position="288"/>
        <end position="296"/>
    </location>
</feature>
<feature type="disulfide bond" evidence="1">
    <location>
        <begin position="292"/>
        <end position="308"/>
    </location>
</feature>
<feature type="disulfide bond" evidence="1">
    <location>
        <begin position="310"/>
        <end position="323"/>
    </location>
</feature>
<feature type="disulfide bond" evidence="1">
    <location>
        <begin position="329"/>
        <end position="340"/>
    </location>
</feature>
<feature type="disulfide bond" evidence="1">
    <location>
        <begin position="336"/>
        <end position="349"/>
    </location>
</feature>
<feature type="disulfide bond" evidence="1">
    <location>
        <begin position="351"/>
        <end position="362"/>
    </location>
</feature>
<feature type="disulfide bond" evidence="28 29 33 35 36">
    <location>
        <begin position="369"/>
        <end position="378"/>
    </location>
</feature>
<feature type="disulfide bond" evidence="28 29 33 35 36">
    <location>
        <begin position="374"/>
        <end position="388"/>
    </location>
</feature>
<feature type="disulfide bond" evidence="28 29 32 33 35 36">
    <location>
        <begin position="390"/>
        <end position="404"/>
    </location>
</feature>
<feature type="disulfide bond" evidence="27 28 29 34 35 36">
    <location>
        <begin position="408"/>
        <end position="413"/>
    </location>
</feature>
<feature type="disulfide bond" evidence="27 28 29 34 35 36">
    <location>
        <begin position="417"/>
        <end position="425"/>
    </location>
</feature>
<feature type="disulfide bond" evidence="27 28 29 30 31 34 35 36">
    <location>
        <begin position="427"/>
        <end position="439"/>
    </location>
</feature>
<feature type="disulfide bond" evidence="29 35 36">
    <location>
        <begin position="445"/>
        <end position="455"/>
    </location>
</feature>
<feature type="disulfide bond" evidence="29 35 36">
    <location>
        <begin position="451"/>
        <end position="464"/>
    </location>
</feature>
<feature type="disulfide bond" evidence="29 35 36">
    <location>
        <begin position="466"/>
        <end position="480"/>
    </location>
</feature>
<feature type="sequence variant" id="VAR_063673" description="In AHUS6." evidence="13">
    <original>D</original>
    <variation>E</variation>
    <location>
        <position position="34"/>
    </location>
</feature>
<feature type="sequence variant" id="VAR_011368" description="In AHUS6; cells transfected with the mutant are less effective in converting C3b to iC3b on the cell surface after complement activation; dbSNP:rs1800576." evidence="12 23 25">
    <original>A</original>
    <variation>T</variation>
    <location>
        <position position="43"/>
    </location>
</feature>
<feature type="sequence variant" id="VAR_063223" description="In AHUS6; cells transfected with the mutant are less effective in converting C3b to iC3b on the cell surface after complement activation; dbSNP:rs121918667." evidence="12">
    <original>D</original>
    <variation>G</variation>
    <location>
        <position position="53"/>
    </location>
</feature>
<feature type="sequence variant" id="VAR_011369" description="In dbSNP:rs1800577." evidence="23">
    <original>G</original>
    <variation>A</variation>
    <location>
        <position position="79"/>
    </location>
</feature>
<feature type="sequence variant" id="VAR_063224" description="In AHUS6; cells transfected with the mutant are less effective in converting C3b to iC3b on the cell surface after complement activation; dbSNP:rs772288987." evidence="12">
    <original>V</original>
    <variation>L</variation>
    <location>
        <position position="81"/>
    </location>
</feature>
<feature type="sequence variant" id="VAR_049011" description="In dbSNP:rs36110902.">
    <original>A</original>
    <variation>P</variation>
    <location>
        <position position="162"/>
    </location>
</feature>
<feature type="sequence variant" id="VAR_063674" description="In AHUS6; dbSNP:rs758686992." evidence="13">
    <original>A</original>
    <variation>G</variation>
    <location>
        <position position="236"/>
    </location>
</feature>
<feature type="sequence variant" id="VAR_011370" description="In dbSNP:rs1042579." evidence="8 9 10 12 22 26">
    <original>A</original>
    <variation>V</variation>
    <location>
        <position position="473"/>
    </location>
</feature>
<feature type="sequence variant" id="VAR_011371" description="In THPH12 and AHUS6; cells transfected with the mutant are less effective in converting C3b to iC3b on the cell surface after complement activation; dbSNP:rs41348347." evidence="9 12 19 23">
    <original>D</original>
    <variation>Y</variation>
    <location>
        <position position="486"/>
    </location>
</feature>
<feature type="sequence variant" id="VAR_011372" description="In AHUS6; cells transfected with the mutant are less effective in converting C3b to iC3b on the cell surface after complement activation; dbSNP:rs1800578." evidence="12 23">
    <original>P</original>
    <variation>S</variation>
    <location>
        <position position="495"/>
    </location>
</feature>
<feature type="sequence variant" id="VAR_011373" description="In AHUS6; cells transfected with the mutant are less effective in converting C3b to iC3b on the cell surface after complement activation; dbSNP:rs1800579." evidence="12 23">
    <original>P</original>
    <variation>L</variation>
    <location>
        <position position="501"/>
    </location>
</feature>
<feature type="mutagenesis site" description="Improved overall glycosaminoglycan attachment, likely due to improved xylosyltransferase acceptor consensus sequence around Ser-492." evidence="20">
    <original>S</original>
    <variation>E</variation>
    <location>
        <position position="490"/>
    </location>
</feature>
<feature type="mutagenesis site" description="Reduced glycosaminoglycan attachment." evidence="20">
    <original>S</original>
    <variation>G</variation>
    <location>
        <position position="492"/>
    </location>
</feature>
<feature type="strand" evidence="41">
    <location>
        <begin position="27"/>
        <end position="31"/>
    </location>
</feature>
<feature type="strand" evidence="41">
    <location>
        <begin position="34"/>
        <end position="39"/>
    </location>
</feature>
<feature type="helix" evidence="41">
    <location>
        <begin position="45"/>
        <end position="54"/>
    </location>
</feature>
<feature type="helix" evidence="41">
    <location>
        <begin position="65"/>
        <end position="74"/>
    </location>
</feature>
<feature type="strand" evidence="41">
    <location>
        <begin position="79"/>
        <end position="82"/>
    </location>
</feature>
<feature type="strand" evidence="41">
    <location>
        <begin position="85"/>
        <end position="92"/>
    </location>
</feature>
<feature type="strand" evidence="41">
    <location>
        <begin position="122"/>
        <end position="124"/>
    </location>
</feature>
<feature type="strand" evidence="41">
    <location>
        <begin position="136"/>
        <end position="141"/>
    </location>
</feature>
<feature type="strand" evidence="41">
    <location>
        <begin position="152"/>
        <end position="156"/>
    </location>
</feature>
<feature type="strand" evidence="41">
    <location>
        <begin position="162"/>
        <end position="170"/>
    </location>
</feature>
<feature type="helix" evidence="39">
    <location>
        <begin position="368"/>
        <end position="371"/>
    </location>
</feature>
<feature type="strand" evidence="39">
    <location>
        <begin position="375"/>
        <end position="380"/>
    </location>
</feature>
<feature type="strand" evidence="39">
    <location>
        <begin position="382"/>
        <end position="384"/>
    </location>
</feature>
<feature type="strand" evidence="39">
    <location>
        <begin position="386"/>
        <end position="389"/>
    </location>
</feature>
<feature type="strand" evidence="38">
    <location>
        <begin position="391"/>
        <end position="393"/>
    </location>
</feature>
<feature type="strand" evidence="39">
    <location>
        <begin position="394"/>
        <end position="397"/>
    </location>
</feature>
<feature type="strand" evidence="39">
    <location>
        <begin position="400"/>
        <end position="406"/>
    </location>
</feature>
<feature type="strand" evidence="39">
    <location>
        <begin position="410"/>
        <end position="414"/>
    </location>
</feature>
<feature type="helix" evidence="40">
    <location>
        <begin position="419"/>
        <end position="421"/>
    </location>
</feature>
<feature type="strand" evidence="37">
    <location>
        <begin position="424"/>
        <end position="426"/>
    </location>
</feature>
<feature type="turn" evidence="38">
    <location>
        <begin position="428"/>
        <end position="430"/>
    </location>
</feature>
<feature type="strand" evidence="39">
    <location>
        <begin position="431"/>
        <end position="434"/>
    </location>
</feature>
<feature type="turn" evidence="39">
    <location>
        <begin position="435"/>
        <end position="437"/>
    </location>
</feature>
<feature type="strand" evidence="39">
    <location>
        <begin position="438"/>
        <end position="441"/>
    </location>
</feature>
<feature type="helix" evidence="39">
    <location>
        <begin position="444"/>
        <end position="447"/>
    </location>
</feature>
<feature type="strand" evidence="39">
    <location>
        <begin position="452"/>
        <end position="457"/>
    </location>
</feature>
<feature type="strand" evidence="39">
    <location>
        <begin position="459"/>
        <end position="466"/>
    </location>
</feature>
<feature type="strand" evidence="39">
    <location>
        <begin position="468"/>
        <end position="471"/>
    </location>
</feature>
<feature type="strand" evidence="39">
    <location>
        <begin position="473"/>
        <end position="477"/>
    </location>
</feature>
<comment type="function">
    <text evidence="2 7 11 14 17 18 24">Endothelial cell receptor that plays a critical role in regulating several physiological processes including hemostasis, coagulation, fibrinolysis, inflammation, and angiogenesis (PubMed:10761923). Acts as a cofactor for thrombin activation of protein C/PROC on the surface of vascular endothelial cells leading to initiation of the activated protein C anticoagulant pathway (PubMed:29323190, PubMed:33836597, PubMed:9395524). Also accelerates the activation of the plasma carboxypeptidase B2/CPB2, which catalyzes removal of C-terminal basic amino acids from its substrates including kinins or anaphylatoxins leading to fibrinolysis inhibition (PubMed:26663133). Plays critical protective roles in changing the cleavage specificity of protease-activated receptor 1/PAR1, inhibiting endothelial cell permeability and inflammation (By similarity). Suppresses inflammation distinctly from its anticoagulant cofactor activity by sequestering HMGB1 thereby preventing it from engaging cellular receptors such as RAGE and contributing to the inflammatory response (PubMed:15841214).</text>
</comment>
<comment type="subunit">
    <text evidence="7 11 15 17 24">Interacts with ITGAL, ITGAM and ITGB2. Interacts with thrombin/F2; this interaction switches the specificity of thrombin from a procoagulant to an anticoagulant and antifibrinolytic protease (PubMed:10761923). Interacts with ANGP1 and ANGP2; these interactions significantly inhibit the generation of activated PC and TAFIa/CPB2 by the thrombin/thrombomodulin complex (PubMed:29323190). Interacts with PF4; this interaction enhances generation of activated protein C (PubMed:9395524). Interacts with HMGB1; this interaction inhibits HMGB1 inflammatory activity (PubMed:15841214).</text>
</comment>
<comment type="interaction">
    <interactant intactId="EBI-941422">
        <id>P07204</id>
    </interactant>
    <interactant intactId="EBI-11957045">
        <id>Q9NVV5-2</id>
        <label>AIG1</label>
    </interactant>
    <organismsDiffer>false</organismsDiffer>
    <experiments>3</experiments>
</comment>
<comment type="interaction">
    <interactant intactId="EBI-941422">
        <id>P07204</id>
    </interactant>
    <interactant intactId="EBI-18302142">
        <id>P55056</id>
        <label>APOC4</label>
    </interactant>
    <organismsDiffer>false</organismsDiffer>
    <experiments>3</experiments>
</comment>
<comment type="interaction">
    <interactant intactId="EBI-941422">
        <id>P07204</id>
    </interactant>
    <interactant intactId="EBI-13059134">
        <id>Q13520</id>
        <label>AQP6</label>
    </interactant>
    <organismsDiffer>false</organismsDiffer>
    <experiments>3</experiments>
</comment>
<comment type="interaction">
    <interactant intactId="EBI-941422">
        <id>P07204</id>
    </interactant>
    <interactant intactId="EBI-7797864">
        <id>P11912</id>
        <label>CD79A</label>
    </interactant>
    <organismsDiffer>false</organismsDiffer>
    <experiments>3</experiments>
</comment>
<comment type="interaction">
    <interactant intactId="EBI-941422">
        <id>P07204</id>
    </interactant>
    <interactant intactId="EBI-7062247">
        <id>Q9UHD4</id>
        <label>CIDEB</label>
    </interactant>
    <organismsDiffer>false</organismsDiffer>
    <experiments>3</experiments>
</comment>
<comment type="interaction">
    <interactant intactId="EBI-941422">
        <id>P07204</id>
    </interactant>
    <interactant intactId="EBI-2680384">
        <id>Q9BQA9</id>
        <label>CYBC1</label>
    </interactant>
    <organismsDiffer>false</organismsDiffer>
    <experiments>3</experiments>
</comment>
<comment type="interaction">
    <interactant intactId="EBI-941422">
        <id>P07204</id>
    </interactant>
    <interactant intactId="EBI-3915253">
        <id>Q15125</id>
        <label>EBP</label>
    </interactant>
    <organismsDiffer>false</organismsDiffer>
    <experiments>3</experiments>
</comment>
<comment type="interaction">
    <interactant intactId="EBI-941422">
        <id>P07204</id>
    </interactant>
    <interactant intactId="EBI-781551">
        <id>Q9Y282</id>
        <label>ERGIC3</label>
    </interactant>
    <organismsDiffer>false</organismsDiffer>
    <experiments>3</experiments>
</comment>
<comment type="interaction">
    <interactant intactId="EBI-941422">
        <id>P07204</id>
    </interactant>
    <interactant intactId="EBI-297094">
        <id>P00734</id>
        <label>F2</label>
    </interactant>
    <organismsDiffer>false</organismsDiffer>
    <experiments>4</experiments>
</comment>
<comment type="interaction">
    <interactant intactId="EBI-941422">
        <id>P07204</id>
    </interactant>
    <interactant intactId="EBI-18304435">
        <id>Q5JX71</id>
        <label>FAM209A</label>
    </interactant>
    <organismsDiffer>false</organismsDiffer>
    <experiments>3</experiments>
</comment>
<comment type="interaction">
    <interactant intactId="EBI-941422">
        <id>P07204</id>
    </interactant>
    <interactant intactId="EBI-11721746">
        <id>Q8TED1</id>
        <label>GPX8</label>
    </interactant>
    <organismsDiffer>false</organismsDiffer>
    <experiments>3</experiments>
</comment>
<comment type="interaction">
    <interactant intactId="EBI-941422">
        <id>P07204</id>
    </interactant>
    <interactant intactId="EBI-8632435">
        <id>P43628</id>
        <label>KIR2DL3</label>
    </interactant>
    <organismsDiffer>false</organismsDiffer>
    <experiments>3</experiments>
</comment>
<comment type="interaction">
    <interactant intactId="EBI-941422">
        <id>P07204</id>
    </interactant>
    <interactant intactId="EBI-6163737">
        <id>Q8N4V1</id>
        <label>MMGT1</label>
    </interactant>
    <organismsDiffer>false</organismsDiffer>
    <experiments>3</experiments>
</comment>
<comment type="interaction">
    <interactant intactId="EBI-941422">
        <id>P07204</id>
    </interactant>
    <interactant intactId="EBI-3923617">
        <id>Q9H2K0</id>
        <label>MTIF3</label>
    </interactant>
    <organismsDiffer>false</organismsDiffer>
    <experiments>3</experiments>
</comment>
<comment type="interaction">
    <interactant intactId="EBI-941422">
        <id>P07204</id>
    </interactant>
    <interactant intactId="EBI-17263240">
        <id>P15941-11</id>
        <label>MUC1</label>
    </interactant>
    <organismsDiffer>false</organismsDiffer>
    <experiments>3</experiments>
</comment>
<comment type="interaction">
    <interactant intactId="EBI-941422">
        <id>P07204</id>
    </interactant>
    <interactant intactId="EBI-716063">
        <id>Q13113</id>
        <label>PDZK1IP1</label>
    </interactant>
    <organismsDiffer>false</organismsDiffer>
    <experiments>3</experiments>
</comment>
<comment type="interaction">
    <interactant intactId="EBI-941422">
        <id>P07204</id>
    </interactant>
    <interactant intactId="EBI-17717171">
        <id>Q9UPV7</id>
        <label>PHF24</label>
    </interactant>
    <organismsDiffer>false</organismsDiffer>
    <experiments>3</experiments>
</comment>
<comment type="interaction">
    <interactant intactId="EBI-941422">
        <id>P07204</id>
    </interactant>
    <interactant intactId="EBI-17589229">
        <id>Q6NTF9-3</id>
        <label>RHBDD2</label>
    </interactant>
    <organismsDiffer>false</organismsDiffer>
    <experiments>3</experiments>
</comment>
<comment type="interaction">
    <interactant intactId="EBI-941422">
        <id>P07204</id>
    </interactant>
    <interactant intactId="EBI-3923779">
        <id>Q9BZV2</id>
        <label>SLC19A3</label>
    </interactant>
    <organismsDiffer>false</organismsDiffer>
    <experiments>3</experiments>
</comment>
<comment type="interaction">
    <interactant intactId="EBI-941422">
        <id>P07204</id>
    </interactant>
    <interactant intactId="EBI-17295964">
        <id>Q9NQQ7-3</id>
        <label>SLC35C2</label>
    </interactant>
    <organismsDiffer>false</organismsDiffer>
    <experiments>3</experiments>
</comment>
<comment type="interaction">
    <interactant intactId="EBI-941422">
        <id>P07204</id>
    </interactant>
    <interactant intactId="EBI-8638294">
        <id>Q9NUH8</id>
        <label>TMEM14B</label>
    </interactant>
    <organismsDiffer>false</organismsDiffer>
    <experiments>3</experiments>
</comment>
<comment type="interaction">
    <interactant intactId="EBI-941422">
        <id>P07204</id>
    </interactant>
    <interactant intactId="EBI-11722971">
        <id>Q53FP2</id>
        <label>TMEM35A</label>
    </interactant>
    <organismsDiffer>false</organismsDiffer>
    <experiments>3</experiments>
</comment>
<comment type="interaction">
    <interactant intactId="EBI-941422">
        <id>P07204</id>
    </interactant>
    <interactant intactId="EBI-2548832">
        <id>Q8N661</id>
        <label>TMEM86B</label>
    </interactant>
    <organismsDiffer>false</organismsDiffer>
    <experiments>3</experiments>
</comment>
<comment type="interaction">
    <interactant intactId="EBI-941422">
        <id>P07204</id>
    </interactant>
    <interactant intactId="EBI-6447886">
        <id>Q9Y320</id>
        <label>TMX2</label>
    </interactant>
    <organismsDiffer>false</organismsDiffer>
    <experiments>3</experiments>
</comment>
<comment type="subcellular location">
    <subcellularLocation>
        <location>Membrane</location>
        <topology>Single-pass type I membrane protein</topology>
    </subcellularLocation>
</comment>
<comment type="tissue specificity">
    <text>Endothelial cells are unique in synthesizing thrombomodulin.</text>
</comment>
<comment type="domain">
    <text evidence="15">Extracellular region (481-515) contains a binding side for alpha-L/beta-2 and alpha-M/beta-2 integrin.</text>
</comment>
<comment type="PTM">
    <text evidence="20">N-glycosylated.</text>
</comment>
<comment type="PTM">
    <text evidence="21">The iron and 2-oxoglutarate dependent 3-hydroxylation of aspartate and asparagine is (R) stereospecific within EGF domains.</text>
</comment>
<comment type="disease" evidence="9 19 23">
    <disease id="DI-01102">
        <name>Thrombophilia due to thrombomodulin defect</name>
        <acronym>THPH12</acronym>
        <description>A hemostatic disorder characterized by a tendency to thrombosis.</description>
        <dbReference type="MIM" id="614486"/>
    </disease>
    <text>The disease may be caused by variants affecting the gene represented in this entry. The role of thrombomodulin in thrombosis is controversial. It is likely that genetic or environmental risk factors in addition to THBD variation are involved in the pathogenesis of venous thrombosis.</text>
</comment>
<comment type="disease" evidence="12 13">
    <disease id="DI-02601">
        <name>Hemolytic uremic syndrome, atypical, 6</name>
        <acronym>AHUS6</acronym>
        <description>An atypical form of hemolytic uremic syndrome. It is a complex genetic disease characterized by microangiopathic hemolytic anemia, thrombocytopenia, renal failure and absence of episodes of enterocolitis and diarrhea. In contrast to typical hemolytic uremic syndrome, atypical forms have a poorer prognosis, with higher death rates and frequent progression to end-stage renal disease.</description>
        <dbReference type="MIM" id="612926"/>
    </disease>
    <text>Disease susceptibility is associated with variants affecting the gene represented in this entry. Other genes may play a role in modifying the phenotype.</text>
</comment>
<comment type="online information" name="Wikipedia">
    <link uri="https://en.wikipedia.org/wiki/Thrombomodulin"/>
    <text>Thrombomodulin entry</text>
</comment>
<comment type="online information" name="Functional Glycomics Gateway - Glycan Binding">
    <link uri="http://www.functionalglycomics.org/glycomics/GBPServlet?&amp;operationType=view&amp;cbpId=cbp_hum_Ctlect_211"/>
    <text>Thrombomodulin</text>
</comment>
<accession>P07204</accession>
<accession>Q8IV29</accession>
<accession>Q9UC32</accession>
<gene>
    <name type="primary">THBD</name>
    <name type="synonym">THRM</name>
</gene>
<organism>
    <name type="scientific">Homo sapiens</name>
    <name type="common">Human</name>
    <dbReference type="NCBI Taxonomy" id="9606"/>
    <lineage>
        <taxon>Eukaryota</taxon>
        <taxon>Metazoa</taxon>
        <taxon>Chordata</taxon>
        <taxon>Craniata</taxon>
        <taxon>Vertebrata</taxon>
        <taxon>Euteleostomi</taxon>
        <taxon>Mammalia</taxon>
        <taxon>Eutheria</taxon>
        <taxon>Euarchontoglires</taxon>
        <taxon>Primates</taxon>
        <taxon>Haplorrhini</taxon>
        <taxon>Catarrhini</taxon>
        <taxon>Hominidae</taxon>
        <taxon>Homo</taxon>
    </lineage>
</organism>
<name>TRBM_HUMAN</name>
<reference key="1">
    <citation type="journal article" date="1987" name="EMBO J.">
        <title>Structure and expression of human thrombomodulin, a thrombin receptor on endothelium acting as a cofactor for protein C activation.</title>
        <authorList>
            <person name="Suzuki K."/>
            <person name="Kusumoto H."/>
            <person name="Deyashiki Y."/>
            <person name="Nishioka J."/>
            <person name="Maruyama I."/>
            <person name="Zushi M."/>
            <person name="Kawahara S."/>
            <person name="Honda G."/>
            <person name="Yamamoto S."/>
            <person name="Horiguchi S."/>
        </authorList>
    </citation>
    <scope>NUCLEOTIDE SEQUENCE [MRNA]</scope>
    <scope>PROTEIN SEQUENCE OF 19-43</scope>
</reference>
<reference key="2">
    <citation type="journal article" date="1987" name="Biochemistry">
        <title>Human thrombomodulin: complete cDNA sequence and chromosome localization of the gene.</title>
        <authorList>
            <person name="Wen D."/>
            <person name="Dittman W.A."/>
            <person name="Ye R.D."/>
            <person name="Deaven L.L."/>
            <person name="Majerus P.W."/>
            <person name="Sadler J.E."/>
        </authorList>
    </citation>
    <scope>NUCLEOTIDE SEQUENCE [MRNA]</scope>
    <scope>PARTIAL PROTEIN SEQUENCE</scope>
</reference>
<reference key="3">
    <citation type="journal article" date="1987" name="Proc. Natl. Acad. Sci. U.S.A.">
        <title>Human thrombomodulin gene is intron depleted: nucleic acid sequences of the cDNA and gene predict protein structure and suggest sites of regulatory control.</title>
        <authorList>
            <person name="Jackman R.W."/>
            <person name="Beeler D.L."/>
            <person name="Fritze L."/>
            <person name="Soff G."/>
            <person name="Rosenberg R.D."/>
        </authorList>
    </citation>
    <scope>NUCLEOTIDE SEQUENCE [GENOMIC DNA]</scope>
</reference>
<reference key="4">
    <citation type="journal article" date="1988" name="J. Biochem.">
        <title>Gene structure of human thrombomodulin, a cofactor for thrombin-catalyzed activation of protein C.</title>
        <authorList>
            <person name="Shirai T."/>
            <person name="Shiojiri S."/>
            <person name="Ito H."/>
            <person name="Yamamoto S."/>
            <person name="Kusumoto H."/>
            <person name="Deyashiki Y."/>
            <person name="Maruyama I."/>
            <person name="Suzuki K."/>
        </authorList>
    </citation>
    <scope>NUCLEOTIDE SEQUENCE [GENOMIC DNA]</scope>
</reference>
<reference key="5">
    <citation type="submission" date="2002-03" db="EMBL/GenBank/DDBJ databases">
        <authorList>
            <consortium name="SeattleSNPs variation discovery resource"/>
        </authorList>
    </citation>
    <scope>NUCLEOTIDE SEQUENCE [GENOMIC DNA]</scope>
    <scope>VARIANT VAL-473</scope>
</reference>
<reference key="6">
    <citation type="journal article" date="2001" name="Nature">
        <title>The DNA sequence and comparative analysis of human chromosome 20.</title>
        <authorList>
            <person name="Deloukas P."/>
            <person name="Matthews L.H."/>
            <person name="Ashurst J.L."/>
            <person name="Burton J."/>
            <person name="Gilbert J.G.R."/>
            <person name="Jones M."/>
            <person name="Stavrides G."/>
            <person name="Almeida J.P."/>
            <person name="Babbage A.K."/>
            <person name="Bagguley C.L."/>
            <person name="Bailey J."/>
            <person name="Barlow K.F."/>
            <person name="Bates K.N."/>
            <person name="Beard L.M."/>
            <person name="Beare D.M."/>
            <person name="Beasley O.P."/>
            <person name="Bird C.P."/>
            <person name="Blakey S.E."/>
            <person name="Bridgeman A.M."/>
            <person name="Brown A.J."/>
            <person name="Buck D."/>
            <person name="Burrill W.D."/>
            <person name="Butler A.P."/>
            <person name="Carder C."/>
            <person name="Carter N.P."/>
            <person name="Chapman J.C."/>
            <person name="Clamp M."/>
            <person name="Clark G."/>
            <person name="Clark L.N."/>
            <person name="Clark S.Y."/>
            <person name="Clee C.M."/>
            <person name="Clegg S."/>
            <person name="Cobley V.E."/>
            <person name="Collier R.E."/>
            <person name="Connor R.E."/>
            <person name="Corby N.R."/>
            <person name="Coulson A."/>
            <person name="Coville G.J."/>
            <person name="Deadman R."/>
            <person name="Dhami P.D."/>
            <person name="Dunn M."/>
            <person name="Ellington A.G."/>
            <person name="Frankland J.A."/>
            <person name="Fraser A."/>
            <person name="French L."/>
            <person name="Garner P."/>
            <person name="Grafham D.V."/>
            <person name="Griffiths C."/>
            <person name="Griffiths M.N.D."/>
            <person name="Gwilliam R."/>
            <person name="Hall R.E."/>
            <person name="Hammond S."/>
            <person name="Harley J.L."/>
            <person name="Heath P.D."/>
            <person name="Ho S."/>
            <person name="Holden J.L."/>
            <person name="Howden P.J."/>
            <person name="Huckle E."/>
            <person name="Hunt A.R."/>
            <person name="Hunt S.E."/>
            <person name="Jekosch K."/>
            <person name="Johnson C.M."/>
            <person name="Johnson D."/>
            <person name="Kay M.P."/>
            <person name="Kimberley A.M."/>
            <person name="King A."/>
            <person name="Knights A."/>
            <person name="Laird G.K."/>
            <person name="Lawlor S."/>
            <person name="Lehvaeslaiho M.H."/>
            <person name="Leversha M.A."/>
            <person name="Lloyd C."/>
            <person name="Lloyd D.M."/>
            <person name="Lovell J.D."/>
            <person name="Marsh V.L."/>
            <person name="Martin S.L."/>
            <person name="McConnachie L.J."/>
            <person name="McLay K."/>
            <person name="McMurray A.A."/>
            <person name="Milne S.A."/>
            <person name="Mistry D."/>
            <person name="Moore M.J.F."/>
            <person name="Mullikin J.C."/>
            <person name="Nickerson T."/>
            <person name="Oliver K."/>
            <person name="Parker A."/>
            <person name="Patel R."/>
            <person name="Pearce T.A.V."/>
            <person name="Peck A.I."/>
            <person name="Phillimore B.J.C.T."/>
            <person name="Prathalingam S.R."/>
            <person name="Plumb R.W."/>
            <person name="Ramsay H."/>
            <person name="Rice C.M."/>
            <person name="Ross M.T."/>
            <person name="Scott C.E."/>
            <person name="Sehra H.K."/>
            <person name="Shownkeen R."/>
            <person name="Sims S."/>
            <person name="Skuce C.D."/>
            <person name="Smith M.L."/>
            <person name="Soderlund C."/>
            <person name="Steward C.A."/>
            <person name="Sulston J.E."/>
            <person name="Swann R.M."/>
            <person name="Sycamore N."/>
            <person name="Taylor R."/>
            <person name="Tee L."/>
            <person name="Thomas D.W."/>
            <person name="Thorpe A."/>
            <person name="Tracey A."/>
            <person name="Tromans A.C."/>
            <person name="Vaudin M."/>
            <person name="Wall M."/>
            <person name="Wallis J.M."/>
            <person name="Whitehead S.L."/>
            <person name="Whittaker P."/>
            <person name="Willey D.L."/>
            <person name="Williams L."/>
            <person name="Williams S.A."/>
            <person name="Wilming L."/>
            <person name="Wray P.W."/>
            <person name="Hubbard T."/>
            <person name="Durbin R.M."/>
            <person name="Bentley D.R."/>
            <person name="Beck S."/>
            <person name="Rogers J."/>
        </authorList>
    </citation>
    <scope>NUCLEOTIDE SEQUENCE [LARGE SCALE GENOMIC DNA]</scope>
</reference>
<reference key="7">
    <citation type="journal article" date="2004" name="Genome Res.">
        <title>The status, quality, and expansion of the NIH full-length cDNA project: the Mammalian Gene Collection (MGC).</title>
        <authorList>
            <consortium name="The MGC Project Team"/>
        </authorList>
    </citation>
    <scope>NUCLEOTIDE SEQUENCE [LARGE SCALE MRNA]</scope>
    <scope>VARIANT VAL-473</scope>
    <source>
        <tissue>Brain</tissue>
        <tissue>Lung</tissue>
    </source>
</reference>
<reference key="8">
    <citation type="journal article" date="1993" name="Biochem. J.">
        <title>Identification of the predominant glycosaminoglycan-attachment site in soluble recombinant human thrombomodulin: potential regulation of functionality by glycosyltransferase competition for serine 474.</title>
        <authorList>
            <person name="Gerlitz B."/>
            <person name="Hassell T."/>
            <person name="Vlahos C.J."/>
            <person name="Parkinson J.F."/>
            <person name="Bang N.U."/>
            <person name="Grinnell B.W."/>
        </authorList>
    </citation>
    <scope>GLYCOSYLATION AT SER-490 AND SER-492</scope>
    <scope>MUTAGENESIS OF SER-490 AND SER-492</scope>
</reference>
<reference key="9">
    <citation type="journal article" date="1993" name="J. Biochem.">
        <title>Urinary thrombomodulin, its isolation and characterization.</title>
        <authorList>
            <person name="Yamamoto S."/>
            <person name="Mizoguchi T."/>
            <person name="Tamaki T."/>
            <person name="Ohkuchi M."/>
            <person name="Kimura S."/>
            <person name="Aoki N."/>
        </authorList>
    </citation>
    <scope>HYDROXYLATION AT ASN-342</scope>
</reference>
<reference key="10">
    <citation type="journal article" date="1997" name="J. Biol. Chem.">
        <title>Platelet factor 4 binds to glycanated forms of thrombomodulin and to protein C. A potential mechanism for enhancing generation of activated protein C.</title>
        <authorList>
            <person name="Dudek A.Z."/>
            <person name="Pennell C.A."/>
            <person name="Decker T.D."/>
            <person name="Young T.A."/>
            <person name="Key N.S."/>
            <person name="Slungaard A."/>
        </authorList>
    </citation>
    <scope>FUNCTION</scope>
    <scope>INTERACTION WITH PF4</scope>
</reference>
<reference key="11">
    <citation type="journal article" date="2005" name="J. Clin. Invest.">
        <title>The N-terminal domain of thrombomodulin sequesters high-mobility group-B1 protein, a novel antiinflammatory mechanism.</title>
        <authorList>
            <person name="Abeyama K."/>
            <person name="Stern D.M."/>
            <person name="Ito Y."/>
            <person name="Kawahara K."/>
            <person name="Yoshimoto Y."/>
            <person name="Tanaka M."/>
            <person name="Uchimura T."/>
            <person name="Ida N."/>
            <person name="Yamazaki Y."/>
            <person name="Yamada S."/>
            <person name="Yamamoto Y."/>
            <person name="Yamamoto H."/>
            <person name="Iino S."/>
            <person name="Taniguchi N."/>
            <person name="Maruyama I."/>
        </authorList>
    </citation>
    <scope>FUNCTION</scope>
    <scope>INTERACTION WITH HMGB1</scope>
</reference>
<reference key="12">
    <citation type="journal article" date="2016" name="Biochem. Biophys. Res. Commun.">
        <title>LFA-1 and Mac-1 integrins bind to the serine/threonine-rich domain of thrombomodulin.</title>
        <authorList>
            <person name="Kawamoto E."/>
            <person name="Okamoto T."/>
            <person name="Takagi Y."/>
            <person name="Honda G."/>
            <person name="Suzuki K."/>
            <person name="Imai H."/>
            <person name="Shimaoka M."/>
        </authorList>
    </citation>
    <scope>INTERACTION WITH ITGAL; ITGAM AND ITGB2</scope>
    <scope>DOMAIN</scope>
</reference>
<reference key="13">
    <citation type="journal article" date="2016" name="J. Thromb. Haemost.">
        <title>Activation of protein C and thrombin activable fibrinolysis inhibitor on cultured human endothelial cells.</title>
        <authorList>
            <person name="Wu C."/>
            <person name="Kim P.Y."/>
            <person name="Swystun L.L."/>
            <person name="Liaw P.C."/>
            <person name="Weitz J.I."/>
        </authorList>
    </citation>
    <scope>FUNCTION</scope>
</reference>
<reference key="14">
    <citation type="journal article" date="2018" name="Sci. Rep.">
        <title>Angiopoietins bind thrombomodulin and inhibit its function as a thrombin cofactor.</title>
        <authorList>
            <person name="Daly C."/>
            <person name="Qian X."/>
            <person name="Castanaro C."/>
            <person name="Pasnikowski E."/>
            <person name="Jiang X."/>
            <person name="Thomson B.R."/>
            <person name="Quaggin S.E."/>
            <person name="Papadopoulos N."/>
            <person name="Wei Y."/>
            <person name="Rudge J.S."/>
            <person name="Thurston G."/>
            <person name="Yancopoulos G.D."/>
            <person name="Davis S."/>
        </authorList>
    </citation>
    <scope>FUNCTION</scope>
    <scope>INTERACTION WITH ANGP1 AND ANGP2</scope>
</reference>
<reference key="15">
    <citation type="journal article" date="2021" name="Proc. Natl. Acad. Sci. U.S.A.">
        <title>Thrombomodulin is essential for maintaining quiescence in vascular endothelial cells.</title>
        <authorList>
            <person name="Giri H."/>
            <person name="Panicker S.R."/>
            <person name="Cai X."/>
            <person name="Biswas I."/>
            <person name="Weiler H."/>
            <person name="Rezaie A.R."/>
        </authorList>
    </citation>
    <scope>FUNCTION</scope>
</reference>
<reference key="16">
    <citation type="journal article" date="1995" name="J. Biol. Chem.">
        <title>The structure of a 19-residue fragment from the C-loop of the fourth epidermal growth factor-like domain of thrombomodulin.</title>
        <authorList>
            <person name="Adler M."/>
            <person name="Seto M.H."/>
            <person name="Nitecki D.E."/>
            <person name="Lin J.H."/>
            <person name="Light D.R."/>
            <person name="Morser J."/>
        </authorList>
    </citation>
    <scope>STRUCTURE BY NMR OF 389-407</scope>
</reference>
<reference key="17">
    <citation type="journal article" date="1995" name="Protein Sci.">
        <title>Synthesis, activity, and preliminary structure of the fourth EGF-like domain of thrombomodulin.</title>
        <authorList>
            <person name="Meininger D.P."/>
            <person name="Hunter M.J."/>
            <person name="Komives E.A."/>
        </authorList>
    </citation>
    <scope>STRUCTURE BY NMR OF 364-407</scope>
</reference>
<reference key="18">
    <citation type="journal article" date="1994" name="Biochemistry">
        <title>Thrombin-bound structure of an EGF subdomain from human thrombomodulin determined by transferred nuclear Overhauser effects.</title>
        <authorList>
            <person name="Srinivasan J."/>
            <person name="Hu S."/>
            <person name="Hrabal R."/>
            <person name="Zhu Y."/>
            <person name="Komives E.A."/>
            <person name="Ni F."/>
        </authorList>
    </citation>
    <scope>STRUCTURE BY NMR OF 427-444</scope>
</reference>
<reference key="19">
    <citation type="journal article" date="1996" name="Protein Sci.">
        <title>Structural resiliency of an EGF-like subdomain bound to its target protein, thrombin.</title>
        <authorList>
            <person name="Hrabal R."/>
            <person name="Komives E.A."/>
            <person name="Ni F."/>
        </authorList>
    </citation>
    <scope>STRUCTURE BY NMR OF 427-444</scope>
</reference>
<reference key="20">
    <citation type="journal article" date="2000" name="Nature">
        <title>Structural basis for the anticoagulant activity of the thrombin-thrombomodulin complex.</title>
        <authorList>
            <person name="Fuentes-Prior P."/>
            <person name="Iwanaga Y."/>
            <person name="Huber R."/>
            <person name="Pagila R."/>
            <person name="Rumennik G."/>
            <person name="Seto M."/>
            <person name="Morser J."/>
            <person name="Light D.R."/>
            <person name="Bode W."/>
        </authorList>
    </citation>
    <scope>X-RAY CRYSTALLOGRAPHY (2.30 ANGSTROMS) OF 363-480</scope>
    <scope>INTERACTION WITH THROMBIN/F2</scope>
    <scope>FUNCTION</scope>
</reference>
<reference key="21">
    <citation type="journal article" date="1997" name="J. Mol. Biol.">
        <title>Structure of the fifth EGF-like domain of thrombomodulin: an EGF-like domain with a novel disulfide-bonding pattern.</title>
        <authorList>
            <person name="Sampoli Benitez B.A."/>
            <person name="Hunter M.J."/>
            <person name="Meininger D.P."/>
            <person name="Komives E.A."/>
        </authorList>
    </citation>
    <scope>STRUCTURE BY NMR OF 405-444</scope>
</reference>
<reference key="22">
    <citation type="journal article" date="1995" name="Blood">
        <title>The first mutation identified in the thrombomodulin gene in a 45-year-old man presenting with thromboembolic disease.</title>
        <authorList>
            <person name="Oehlin A.-K."/>
            <person name="Marlar R.A."/>
        </authorList>
    </citation>
    <scope>VARIANT THPH12 TYR-486</scope>
</reference>
<reference key="23">
    <citation type="journal article" date="1997" name="Thromb. Haemost.">
        <title>Thrombomodulin gene variations and thromboembolic disease.</title>
        <authorList>
            <person name="Oehlin A.-K."/>
            <person name="Norlund L."/>
            <person name="Marlar R.A."/>
        </authorList>
    </citation>
    <scope>VARIANT THPH12 TYR-486</scope>
    <scope>VARIANTS THR-43; ALA-79; SER-495 AND LEU-501</scope>
</reference>
<reference key="24">
    <citation type="journal article" date="1997" name="Thromb. Haemost.">
        <title>A common thrombomodulin amino acid dimorphism is associated with myocardial infarction.</title>
        <authorList>
            <person name="Norlund L."/>
            <person name="Holm J."/>
            <person name="Zoller B."/>
            <person name="Oehlin A.-K."/>
        </authorList>
    </citation>
    <scope>VARIANT VAL-473</scope>
</reference>
<reference key="25">
    <citation type="journal article" date="1998" name="Thromb. Haemost.">
        <title>A mutation in the thrombomodulin gene, 127G to A coding for Ala25Thr, and the risk of myocardial infarction in men.</title>
        <authorList>
            <person name="Doggen C.J.M."/>
            <person name="Kunz G."/>
            <person name="Rosendaal F.R."/>
            <person name="Lane D.A."/>
            <person name="Vos H.L."/>
            <person name="Stubbs P.J."/>
            <person name="Manger Cats V."/>
            <person name="Ireland H."/>
        </authorList>
    </citation>
    <scope>VARIANT THR-43</scope>
</reference>
<reference key="26">
    <citation type="journal article" date="2001" name="Circulation">
        <title>Thrombomodulin Ala455Val polymorphism and risk of coronary heart disease.</title>
        <authorList>
            <person name="Wu K.K."/>
            <person name="Aleksic N."/>
            <person name="Ahn C."/>
            <person name="Boerwinkle E."/>
            <person name="Folsom A.R."/>
            <person name="Juneja H."/>
        </authorList>
    </citation>
    <scope>VARIANT VAL-473</scope>
</reference>
<reference key="27">
    <citation type="journal article" date="2002" name="Br. J. Haematol.">
        <title>Mutations in the thrombomodulin gene are rare in patients with severe thrombophilia.</title>
        <authorList>
            <person name="Faioni E.M."/>
            <person name="Franchi F."/>
            <person name="Castaman G."/>
            <person name="Biguzzi E."/>
            <person name="Rodeghiero F."/>
        </authorList>
    </citation>
    <scope>VARIANT THPH12 TYR-486</scope>
    <scope>VARIANT VAL-473</scope>
</reference>
<reference key="28">
    <citation type="journal article" date="2009" name="N. Engl. J. Med.">
        <title>Thrombomodulin mutations in atypical hemolytic-uremic syndrome.</title>
        <authorList>
            <person name="Delvaeye M."/>
            <person name="Noris M."/>
            <person name="De Vriese A."/>
            <person name="Esmon C.T."/>
            <person name="Esmon N.L."/>
            <person name="Ferrell G."/>
            <person name="Del-Favero J."/>
            <person name="Plaisance S."/>
            <person name="Claes B."/>
            <person name="Lambrechts D."/>
            <person name="Zoja C."/>
            <person name="Remuzzi G."/>
            <person name="Conway E.M."/>
        </authorList>
    </citation>
    <scope>VARIANTS AHUS6 THR-43; GLY-53; LEU-81; TYR-486; SER-495 AND LEU-501</scope>
    <scope>CHARACTERIZATION OF VARIANTS AHUS6 THR-43; GLY-53; LEU-81; TYR-486; SER-495 AND LEU-501</scope>
    <scope>VARIANT VAL-473</scope>
</reference>
<reference key="29">
    <citation type="journal article" date="2010" name="Hum. Mutat.">
        <title>Mutations in alternative pathway complement proteins in American patients with atypical hemolytic uremic syndrome.</title>
        <authorList>
            <person name="Maga T.K."/>
            <person name="Nishimura C.J."/>
            <person name="Weaver A.E."/>
            <person name="Frees K.L."/>
            <person name="Smith R.J.H."/>
        </authorList>
    </citation>
    <scope>VARIANTS AHUS6 GLU-34 AND GLY-236</scope>
</reference>
<proteinExistence type="evidence at protein level"/>
<protein>
    <recommendedName>
        <fullName>Thrombomodulin</fullName>
        <shortName>TM</shortName>
    </recommendedName>
    <alternativeName>
        <fullName>Fetomodulin</fullName>
    </alternativeName>
    <cdAntigenName>CD141</cdAntigenName>
</protein>
<keyword id="KW-0002">3D-structure</keyword>
<keyword id="KW-0094">Blood coagulation</keyword>
<keyword id="KW-0903">Direct protein sequencing</keyword>
<keyword id="KW-0225">Disease variant</keyword>
<keyword id="KW-1015">Disulfide bond</keyword>
<keyword id="KW-0245">EGF-like domain</keyword>
<keyword id="KW-0325">Glycoprotein</keyword>
<keyword id="KW-1068">Hemolytic uremic syndrome</keyword>
<keyword id="KW-0356">Hemostasis</keyword>
<keyword id="KW-0379">Hydroxylation</keyword>
<keyword id="KW-0472">Membrane</keyword>
<keyword id="KW-0654">Proteoglycan</keyword>
<keyword id="KW-1267">Proteomics identification</keyword>
<keyword id="KW-0675">Receptor</keyword>
<keyword id="KW-1185">Reference proteome</keyword>
<keyword id="KW-0677">Repeat</keyword>
<keyword id="KW-0732">Signal</keyword>
<keyword id="KW-0792">Thrombophilia</keyword>
<keyword id="KW-0812">Transmembrane</keyword>
<keyword id="KW-1133">Transmembrane helix</keyword>
<evidence type="ECO:0000250" key="1"/>
<evidence type="ECO:0000250" key="2">
    <source>
        <dbReference type="UniProtKB" id="P15306"/>
    </source>
</evidence>
<evidence type="ECO:0000255" key="3"/>
<evidence type="ECO:0000255" key="4">
    <source>
        <dbReference type="PROSITE-ProRule" id="PRU00040"/>
    </source>
</evidence>
<evidence type="ECO:0000255" key="5">
    <source>
        <dbReference type="PROSITE-ProRule" id="PRU00076"/>
    </source>
</evidence>
<evidence type="ECO:0000256" key="6">
    <source>
        <dbReference type="SAM" id="MobiDB-lite"/>
    </source>
</evidence>
<evidence type="ECO:0000269" key="7">
    <source>
    </source>
</evidence>
<evidence type="ECO:0000269" key="8">
    <source>
    </source>
</evidence>
<evidence type="ECO:0000269" key="9">
    <source>
    </source>
</evidence>
<evidence type="ECO:0000269" key="10">
    <source>
    </source>
</evidence>
<evidence type="ECO:0000269" key="11">
    <source>
    </source>
</evidence>
<evidence type="ECO:0000269" key="12">
    <source>
    </source>
</evidence>
<evidence type="ECO:0000269" key="13">
    <source>
    </source>
</evidence>
<evidence type="ECO:0000269" key="14">
    <source>
    </source>
</evidence>
<evidence type="ECO:0000269" key="15">
    <source>
    </source>
</evidence>
<evidence type="ECO:0000269" key="16">
    <source>
    </source>
</evidence>
<evidence type="ECO:0000269" key="17">
    <source>
    </source>
</evidence>
<evidence type="ECO:0000269" key="18">
    <source>
    </source>
</evidence>
<evidence type="ECO:0000269" key="19">
    <source>
    </source>
</evidence>
<evidence type="ECO:0000269" key="20">
    <source>
    </source>
</evidence>
<evidence type="ECO:0000269" key="21">
    <source>
    </source>
</evidence>
<evidence type="ECO:0000269" key="22">
    <source>
    </source>
</evidence>
<evidence type="ECO:0000269" key="23">
    <source>
    </source>
</evidence>
<evidence type="ECO:0000269" key="24">
    <source>
    </source>
</evidence>
<evidence type="ECO:0000269" key="25">
    <source>
    </source>
</evidence>
<evidence type="ECO:0000269" key="26">
    <source ref="5"/>
</evidence>
<evidence type="ECO:0007744" key="27">
    <source>
        <dbReference type="PDB" id="1ADX"/>
    </source>
</evidence>
<evidence type="ECO:0007744" key="28">
    <source>
        <dbReference type="PDB" id="1DQB"/>
    </source>
</evidence>
<evidence type="ECO:0007744" key="29">
    <source>
        <dbReference type="PDB" id="1DX5"/>
    </source>
</evidence>
<evidence type="ECO:0007744" key="30">
    <source>
        <dbReference type="PDB" id="1EGT"/>
    </source>
</evidence>
<evidence type="ECO:0007744" key="31">
    <source>
        <dbReference type="PDB" id="1FGD"/>
    </source>
</evidence>
<evidence type="ECO:0007744" key="32">
    <source>
        <dbReference type="PDB" id="1TMR"/>
    </source>
</evidence>
<evidence type="ECO:0007744" key="33">
    <source>
        <dbReference type="PDB" id="1ZAQ"/>
    </source>
</evidence>
<evidence type="ECO:0007744" key="34">
    <source>
        <dbReference type="PDB" id="2ADX"/>
    </source>
</evidence>
<evidence type="ECO:0007744" key="35">
    <source>
        <dbReference type="PDB" id="3GIS"/>
    </source>
</evidence>
<evidence type="ECO:0007744" key="36">
    <source>
        <dbReference type="PDB" id="5TO3"/>
    </source>
</evidence>
<evidence type="ECO:0007829" key="37">
    <source>
        <dbReference type="PDB" id="1ADX"/>
    </source>
</evidence>
<evidence type="ECO:0007829" key="38">
    <source>
        <dbReference type="PDB" id="1DQB"/>
    </source>
</evidence>
<evidence type="ECO:0007829" key="39">
    <source>
        <dbReference type="PDB" id="1DX5"/>
    </source>
</evidence>
<evidence type="ECO:0007829" key="40">
    <source>
        <dbReference type="PDB" id="5TO3"/>
    </source>
</evidence>
<evidence type="ECO:0007829" key="41">
    <source>
        <dbReference type="PDB" id="7T4R"/>
    </source>
</evidence>